<feature type="propeptide" id="PRO_0000024252" description="Leader sequence" evidence="3">
    <location>
        <begin position="1"/>
        <end position="7"/>
    </location>
</feature>
<feature type="chain" id="PRO_0000024253" description="Type II secretion system protein J">
    <location>
        <begin position="8"/>
        <end position="206"/>
    </location>
</feature>
<feature type="transmembrane region" description="Helical" evidence="2">
    <location>
        <begin position="8"/>
        <end position="28"/>
    </location>
</feature>
<feature type="modified residue" description="N-methylphenylalanine" evidence="3">
    <location>
        <position position="8"/>
    </location>
</feature>
<evidence type="ECO:0000250" key="1">
    <source>
        <dbReference type="UniProtKB" id="Q00517"/>
    </source>
</evidence>
<evidence type="ECO:0000255" key="2"/>
<evidence type="ECO:0000255" key="3">
    <source>
        <dbReference type="PROSITE-ProRule" id="PRU01070"/>
    </source>
</evidence>
<evidence type="ECO:0000305" key="4"/>
<comment type="function">
    <text evidence="1">Component of the type II secretion system required for the energy-dependent secretion of extracellular factors such as proteases and toxins from the periplasm. Part of the pseudopilus tip complex that is critical for the recognition and binding of secretion substrates.</text>
</comment>
<comment type="subunit">
    <text evidence="1">Type II secretion is composed of four main components: the outer membrane complex, the inner membrane complex, the cytoplasmic secretion ATPase and the periplasm-spanning pseudopilus. Interacts with core component OutG.</text>
</comment>
<comment type="subcellular location">
    <subcellularLocation>
        <location evidence="1">Cell inner membrane</location>
        <topology evidence="2">Single-pass membrane protein</topology>
    </subcellularLocation>
</comment>
<comment type="PTM">
    <text evidence="1">Cleaved by prepilin peptidase.</text>
</comment>
<comment type="PTM">
    <text evidence="1">Methylated by prepilin peptidase at the amino group of the N-terminal phenylalanine once the leader sequence is cleaved by prepilin peptidase.</text>
</comment>
<comment type="similarity">
    <text evidence="4">Belongs to the GSP J family.</text>
</comment>
<organism>
    <name type="scientific">Dickeya chrysanthemi</name>
    <name type="common">Pectobacterium chrysanthemi</name>
    <name type="synonym">Erwinia chrysanthemi</name>
    <dbReference type="NCBI Taxonomy" id="556"/>
    <lineage>
        <taxon>Bacteria</taxon>
        <taxon>Pseudomonadati</taxon>
        <taxon>Pseudomonadota</taxon>
        <taxon>Gammaproteobacteria</taxon>
        <taxon>Enterobacterales</taxon>
        <taxon>Pectobacteriaceae</taxon>
        <taxon>Dickeya</taxon>
    </lineage>
</organism>
<sequence length="206" mass="23500">MKQPERGFTLLEVMLALAIFAALSLAASQVMNGVMRNDEASARKEARLAELQRGFSLMERDFSQIVPRRSQGYELGFYAERYQLSSADWAVSFIRNGWLNPLGIMPRSELQRVGYRLRGDTLERLFYDSSEPLSTQEPAVRPVLTGVTGFVLRFFGKDGWQERWDDPANLPQGIAIVVTLRDYGEITRIFLITPRYGAATQRRSER</sequence>
<keyword id="KW-0997">Cell inner membrane</keyword>
<keyword id="KW-1003">Cell membrane</keyword>
<keyword id="KW-0472">Membrane</keyword>
<keyword id="KW-0488">Methylation</keyword>
<keyword id="KW-0653">Protein transport</keyword>
<keyword id="KW-0812">Transmembrane</keyword>
<keyword id="KW-1133">Transmembrane helix</keyword>
<keyword id="KW-0813">Transport</keyword>
<protein>
    <recommendedName>
        <fullName>Type II secretion system protein J</fullName>
        <shortName>T2SS protein J</shortName>
    </recommendedName>
    <alternativeName>
        <fullName>General secretion pathway protein J</fullName>
    </alternativeName>
    <alternativeName>
        <fullName>Pectic enzymes secretion protein OutJ</fullName>
    </alternativeName>
</protein>
<reference key="1">
    <citation type="journal article" date="1991" name="Proc. Natl. Acad. Sci. U.S.A.">
        <title>Cloned Erwinia chrysanthemi out genes enable Escherichia coli to selectively secrete a diverse family of heterologous proteins to its milieu.</title>
        <authorList>
            <person name="He S.Y."/>
            <person name="Lindeberg M."/>
            <person name="Chatterjee A.K."/>
            <person name="Collmer A."/>
        </authorList>
    </citation>
    <scope>NUCLEOTIDE SEQUENCE [GENOMIC DNA]</scope>
    <source>
        <strain>EC16</strain>
    </source>
</reference>
<dbReference type="EMBL" id="M37886">
    <property type="protein sequence ID" value="AAA24828.1"/>
    <property type="molecule type" value="Genomic_DNA"/>
</dbReference>
<dbReference type="EMBL" id="L02214">
    <property type="protein sequence ID" value="AAA24837.1"/>
    <property type="molecule type" value="Genomic_DNA"/>
</dbReference>
<dbReference type="SMR" id="P24689"/>
<dbReference type="GO" id="GO:0005886">
    <property type="term" value="C:plasma membrane"/>
    <property type="evidence" value="ECO:0007669"/>
    <property type="project" value="UniProtKB-SubCell"/>
</dbReference>
<dbReference type="GO" id="GO:0015627">
    <property type="term" value="C:type II protein secretion system complex"/>
    <property type="evidence" value="ECO:0007669"/>
    <property type="project" value="InterPro"/>
</dbReference>
<dbReference type="GO" id="GO:0015628">
    <property type="term" value="P:protein secretion by the type II secretion system"/>
    <property type="evidence" value="ECO:0007669"/>
    <property type="project" value="InterPro"/>
</dbReference>
<dbReference type="Gene3D" id="3.10.610.10">
    <property type="entry name" value="GSPII I/J protein-like"/>
    <property type="match status" value="1"/>
</dbReference>
<dbReference type="Gene3D" id="2.10.70.20">
    <property type="entry name" value="gspk-gspi-gspj complex like domains"/>
    <property type="match status" value="1"/>
</dbReference>
<dbReference type="InterPro" id="IPR012902">
    <property type="entry name" value="N_methyl_site"/>
</dbReference>
<dbReference type="InterPro" id="IPR045584">
    <property type="entry name" value="Pilin-like"/>
</dbReference>
<dbReference type="InterPro" id="IPR010055">
    <property type="entry name" value="T2SS_protein-GspJ"/>
</dbReference>
<dbReference type="InterPro" id="IPR051621">
    <property type="entry name" value="T2SS_protein_J"/>
</dbReference>
<dbReference type="NCBIfam" id="TIGR01711">
    <property type="entry name" value="gspJ"/>
    <property type="match status" value="1"/>
</dbReference>
<dbReference type="NCBIfam" id="TIGR02532">
    <property type="entry name" value="IV_pilin_GFxxxE"/>
    <property type="match status" value="1"/>
</dbReference>
<dbReference type="PANTHER" id="PTHR39583:SF2">
    <property type="entry name" value="TYPE II SECRETION SYSTEM PROTEIN J"/>
    <property type="match status" value="1"/>
</dbReference>
<dbReference type="PANTHER" id="PTHR39583">
    <property type="entry name" value="TYPE II SECRETION SYSTEM PROTEIN J-RELATED"/>
    <property type="match status" value="1"/>
</dbReference>
<dbReference type="Pfam" id="PF07963">
    <property type="entry name" value="N_methyl"/>
    <property type="match status" value="1"/>
</dbReference>
<dbReference type="Pfam" id="PF11612">
    <property type="entry name" value="T2SSJ"/>
    <property type="match status" value="1"/>
</dbReference>
<dbReference type="SUPFAM" id="SSF54523">
    <property type="entry name" value="Pili subunits"/>
    <property type="match status" value="1"/>
</dbReference>
<dbReference type="PROSITE" id="PS00409">
    <property type="entry name" value="PROKAR_NTER_METHYL"/>
    <property type="match status" value="1"/>
</dbReference>
<gene>
    <name type="primary">outJ</name>
</gene>
<name>GSPJ_DICCH</name>
<accession>P24689</accession>
<proteinExistence type="inferred from homology"/>